<gene>
    <name type="primary">tusE</name>
    <name type="ordered locus">SDY_0944</name>
</gene>
<evidence type="ECO:0000250" key="1"/>
<evidence type="ECO:0000305" key="2"/>
<sequence length="109" mass="12400">MLIFEGKEIETDTEGYLKESSQWSESLAVVIAENEGISLSPEHWEVVRFVRDFYLEFNTSPAIRMLVKAMANKFGEEKGNSRYLYRLFPKGPAKQATKIAGLPKPVKCI</sequence>
<keyword id="KW-0963">Cytoplasm</keyword>
<keyword id="KW-1185">Reference proteome</keyword>
<keyword id="KW-0808">Transferase</keyword>
<keyword id="KW-0819">tRNA processing</keyword>
<protein>
    <recommendedName>
        <fullName>Sulfurtransferase TusE</fullName>
        <ecNumber>2.8.1.-</ecNumber>
    </recommendedName>
    <alternativeName>
        <fullName>tRNA 2-thiouridine synthesizing protein E</fullName>
    </alternativeName>
</protein>
<feature type="chain" id="PRO_0000234619" description="Sulfurtransferase TusE">
    <location>
        <begin position="1"/>
        <end position="109"/>
    </location>
</feature>
<feature type="active site" description="Cysteine persulfide intermediate" evidence="1">
    <location>
        <position position="108"/>
    </location>
</feature>
<proteinExistence type="inferred from homology"/>
<comment type="function">
    <text evidence="1">Part of a sulfur-relay system required for 2-thiolation of 5-methylaminomethyl-2-thiouridine (mnm(5)s(2)U) at tRNA wobble positions. Could accept sulfur from TusD (By similarity).</text>
</comment>
<comment type="subunit">
    <text evidence="1">Interacts with the TusBCD complex. Interacts with MnmA (By similarity).</text>
</comment>
<comment type="subcellular location">
    <subcellularLocation>
        <location evidence="1">Cytoplasm</location>
    </subcellularLocation>
</comment>
<comment type="similarity">
    <text evidence="2">Belongs to the DsrC/TusE family.</text>
</comment>
<comment type="sequence caution" evidence="2">
    <conflict type="erroneous initiation">
        <sequence resource="EMBL-CDS" id="ABB61118"/>
    </conflict>
</comment>
<dbReference type="EC" id="2.8.1.-"/>
<dbReference type="EMBL" id="CP000034">
    <property type="protein sequence ID" value="ABB61118.1"/>
    <property type="status" value="ALT_INIT"/>
    <property type="molecule type" value="Genomic_DNA"/>
</dbReference>
<dbReference type="RefSeq" id="WP_001301417.1">
    <property type="nucleotide sequence ID" value="NC_007606.1"/>
</dbReference>
<dbReference type="RefSeq" id="YP_402609.2">
    <property type="nucleotide sequence ID" value="NC_007606.1"/>
</dbReference>
<dbReference type="SMR" id="Q32HT7"/>
<dbReference type="STRING" id="300267.SDY_0944"/>
<dbReference type="EnsemblBacteria" id="ABB61118">
    <property type="protein sequence ID" value="ABB61118"/>
    <property type="gene ID" value="SDY_0944"/>
</dbReference>
<dbReference type="KEGG" id="sdy:SDY_0944"/>
<dbReference type="PATRIC" id="fig|300267.13.peg.1092"/>
<dbReference type="HOGENOM" id="CLU_153199_0_0_6"/>
<dbReference type="Proteomes" id="UP000002716">
    <property type="component" value="Chromosome"/>
</dbReference>
<dbReference type="GO" id="GO:0005737">
    <property type="term" value="C:cytoplasm"/>
    <property type="evidence" value="ECO:0007669"/>
    <property type="project" value="UniProtKB-SubCell"/>
</dbReference>
<dbReference type="GO" id="GO:0097163">
    <property type="term" value="F:sulfur carrier activity"/>
    <property type="evidence" value="ECO:0007669"/>
    <property type="project" value="TreeGrafter"/>
</dbReference>
<dbReference type="GO" id="GO:0016740">
    <property type="term" value="F:transferase activity"/>
    <property type="evidence" value="ECO:0007669"/>
    <property type="project" value="UniProtKB-KW"/>
</dbReference>
<dbReference type="GO" id="GO:0002143">
    <property type="term" value="P:tRNA wobble position uridine thiolation"/>
    <property type="evidence" value="ECO:0007669"/>
    <property type="project" value="TreeGrafter"/>
</dbReference>
<dbReference type="FunFam" id="1.10.10.370:FF:000001">
    <property type="entry name" value="Sulfurtransferase"/>
    <property type="match status" value="1"/>
</dbReference>
<dbReference type="FunFam" id="3.30.1420.10:FF:000001">
    <property type="entry name" value="Sulfurtransferase"/>
    <property type="match status" value="1"/>
</dbReference>
<dbReference type="Gene3D" id="3.30.1420.10">
    <property type="match status" value="1"/>
</dbReference>
<dbReference type="Gene3D" id="1.10.10.370">
    <property type="entry name" value="DsrC-like protein, C-terminal domain"/>
    <property type="match status" value="1"/>
</dbReference>
<dbReference type="InterPro" id="IPR042072">
    <property type="entry name" value="DsrC-like_C"/>
</dbReference>
<dbReference type="InterPro" id="IPR025526">
    <property type="entry name" value="DsrC-like_dom_sf"/>
</dbReference>
<dbReference type="InterPro" id="IPR043163">
    <property type="entry name" value="DsrC-like_N"/>
</dbReference>
<dbReference type="InterPro" id="IPR007453">
    <property type="entry name" value="DsrC/TusE"/>
</dbReference>
<dbReference type="NCBIfam" id="TIGR03342">
    <property type="entry name" value="dsrC_tusE_dsvC"/>
    <property type="match status" value="1"/>
</dbReference>
<dbReference type="NCBIfam" id="NF008562">
    <property type="entry name" value="PRK11508.1"/>
    <property type="match status" value="1"/>
</dbReference>
<dbReference type="PANTHER" id="PTHR37010">
    <property type="entry name" value="SULFURTRANSFERASE TUSE"/>
    <property type="match status" value="1"/>
</dbReference>
<dbReference type="PANTHER" id="PTHR37010:SF1">
    <property type="entry name" value="SULFURTRANSFERASE TUSE"/>
    <property type="match status" value="1"/>
</dbReference>
<dbReference type="Pfam" id="PF04358">
    <property type="entry name" value="DsrC"/>
    <property type="match status" value="1"/>
</dbReference>
<dbReference type="PIRSF" id="PIRSF006223">
    <property type="entry name" value="DsrC_TusE"/>
    <property type="match status" value="1"/>
</dbReference>
<dbReference type="SUPFAM" id="SSF69721">
    <property type="entry name" value="DsrC, the gamma subunit of dissimilatory sulfite reductase"/>
    <property type="match status" value="1"/>
</dbReference>
<organism>
    <name type="scientific">Shigella dysenteriae serotype 1 (strain Sd197)</name>
    <dbReference type="NCBI Taxonomy" id="300267"/>
    <lineage>
        <taxon>Bacteria</taxon>
        <taxon>Pseudomonadati</taxon>
        <taxon>Pseudomonadota</taxon>
        <taxon>Gammaproteobacteria</taxon>
        <taxon>Enterobacterales</taxon>
        <taxon>Enterobacteriaceae</taxon>
        <taxon>Shigella</taxon>
    </lineage>
</organism>
<name>TUSE_SHIDS</name>
<reference key="1">
    <citation type="journal article" date="2005" name="Nucleic Acids Res.">
        <title>Genome dynamics and diversity of Shigella species, the etiologic agents of bacillary dysentery.</title>
        <authorList>
            <person name="Yang F."/>
            <person name="Yang J."/>
            <person name="Zhang X."/>
            <person name="Chen L."/>
            <person name="Jiang Y."/>
            <person name="Yan Y."/>
            <person name="Tang X."/>
            <person name="Wang J."/>
            <person name="Xiong Z."/>
            <person name="Dong J."/>
            <person name="Xue Y."/>
            <person name="Zhu Y."/>
            <person name="Xu X."/>
            <person name="Sun L."/>
            <person name="Chen S."/>
            <person name="Nie H."/>
            <person name="Peng J."/>
            <person name="Xu J."/>
            <person name="Wang Y."/>
            <person name="Yuan Z."/>
            <person name="Wen Y."/>
            <person name="Yao Z."/>
            <person name="Shen Y."/>
            <person name="Qiang B."/>
            <person name="Hou Y."/>
            <person name="Yu J."/>
            <person name="Jin Q."/>
        </authorList>
    </citation>
    <scope>NUCLEOTIDE SEQUENCE [LARGE SCALE GENOMIC DNA]</scope>
    <source>
        <strain>Sd197</strain>
    </source>
</reference>
<accession>Q32HT7</accession>